<name>ISM1_HUMAN</name>
<keyword id="KW-1015">Disulfide bond</keyword>
<keyword id="KW-0325">Glycoprotein</keyword>
<keyword id="KW-1267">Proteomics identification</keyword>
<keyword id="KW-1185">Reference proteome</keyword>
<keyword id="KW-0964">Secreted</keyword>
<keyword id="KW-0732">Signal</keyword>
<accession>B1AKI9</accession>
<accession>Q8WVH9</accession>
<gene>
    <name type="primary">ISM1</name>
    <name type="synonym">C20orf82</name>
    <name type="synonym">ISM</name>
</gene>
<dbReference type="EMBL" id="AL050320">
    <property type="status" value="NOT_ANNOTATED_CDS"/>
    <property type="molecule type" value="Genomic_DNA"/>
</dbReference>
<dbReference type="EMBL" id="AL133463">
    <property type="status" value="NOT_ANNOTATED_CDS"/>
    <property type="molecule type" value="Genomic_DNA"/>
</dbReference>
<dbReference type="EMBL" id="CH471133">
    <property type="protein sequence ID" value="EAX10318.1"/>
    <property type="status" value="ALT_SEQ"/>
    <property type="molecule type" value="Genomic_DNA"/>
</dbReference>
<dbReference type="EMBL" id="BC017997">
    <property type="protein sequence ID" value="AAH17997.1"/>
    <property type="molecule type" value="mRNA"/>
</dbReference>
<dbReference type="CCDS" id="CCDS46579.1"/>
<dbReference type="RefSeq" id="NP_543016.1">
    <property type="nucleotide sequence ID" value="NM_080826.2"/>
</dbReference>
<dbReference type="SASBDB" id="B1AKI9"/>
<dbReference type="BioGRID" id="126738">
    <property type="interactions" value="1"/>
</dbReference>
<dbReference type="FunCoup" id="B1AKI9">
    <property type="interactions" value="201"/>
</dbReference>
<dbReference type="STRING" id="9606.ENSP00000262487"/>
<dbReference type="GlyCosmos" id="B1AKI9">
    <property type="glycosylation" value="1 site, No reported glycans"/>
</dbReference>
<dbReference type="GlyGen" id="B1AKI9">
    <property type="glycosylation" value="3 sites"/>
</dbReference>
<dbReference type="iPTMnet" id="B1AKI9"/>
<dbReference type="PhosphoSitePlus" id="B1AKI9"/>
<dbReference type="BioMuta" id="ISM1"/>
<dbReference type="jPOST" id="B1AKI9"/>
<dbReference type="MassIVE" id="B1AKI9"/>
<dbReference type="PaxDb" id="9606-ENSP00000262487"/>
<dbReference type="PeptideAtlas" id="B1AKI9"/>
<dbReference type="ProteomicsDB" id="3068"/>
<dbReference type="Antibodypedia" id="52888">
    <property type="antibodies" value="68 antibodies from 12 providers"/>
</dbReference>
<dbReference type="DNASU" id="140862"/>
<dbReference type="Ensembl" id="ENST00000262487.5">
    <property type="protein sequence ID" value="ENSP00000262487.3"/>
    <property type="gene ID" value="ENSG00000101230.6"/>
</dbReference>
<dbReference type="GeneID" id="140862"/>
<dbReference type="KEGG" id="hsa:140862"/>
<dbReference type="MANE-Select" id="ENST00000262487.5">
    <property type="protein sequence ID" value="ENSP00000262487.3"/>
    <property type="RefSeq nucleotide sequence ID" value="NM_080826.2"/>
    <property type="RefSeq protein sequence ID" value="NP_543016.1"/>
</dbReference>
<dbReference type="UCSC" id="uc010gce.2">
    <property type="organism name" value="human"/>
</dbReference>
<dbReference type="AGR" id="HGNC:16213"/>
<dbReference type="CTD" id="140862"/>
<dbReference type="DisGeNET" id="140862"/>
<dbReference type="GeneCards" id="ISM1"/>
<dbReference type="HGNC" id="HGNC:16213">
    <property type="gene designation" value="ISM1"/>
</dbReference>
<dbReference type="HPA" id="ENSG00000101230">
    <property type="expression patterns" value="Tissue enhanced (thyroid)"/>
</dbReference>
<dbReference type="MIM" id="615793">
    <property type="type" value="gene"/>
</dbReference>
<dbReference type="neXtProt" id="NX_B1AKI9"/>
<dbReference type="OpenTargets" id="ENSG00000101230"/>
<dbReference type="PharmGKB" id="PA164721080"/>
<dbReference type="VEuPathDB" id="HostDB:ENSG00000101230"/>
<dbReference type="eggNOG" id="ENOG502QR6G">
    <property type="taxonomic scope" value="Eukaryota"/>
</dbReference>
<dbReference type="GeneTree" id="ENSGT00940000159062"/>
<dbReference type="HOGENOM" id="CLU_030263_0_0_1"/>
<dbReference type="InParanoid" id="B1AKI9"/>
<dbReference type="OMA" id="FRQQNGH"/>
<dbReference type="OrthoDB" id="9930623at2759"/>
<dbReference type="PAN-GO" id="B1AKI9">
    <property type="GO annotations" value="1 GO annotation based on evolutionary models"/>
</dbReference>
<dbReference type="PhylomeDB" id="B1AKI9"/>
<dbReference type="TreeFam" id="TF331333"/>
<dbReference type="PathwayCommons" id="B1AKI9"/>
<dbReference type="BioGRID-ORCS" id="140862">
    <property type="hits" value="18 hits in 1146 CRISPR screens"/>
</dbReference>
<dbReference type="ChiTaRS" id="ISM1">
    <property type="organism name" value="human"/>
</dbReference>
<dbReference type="GenomeRNAi" id="140862"/>
<dbReference type="Pharos" id="B1AKI9">
    <property type="development level" value="Tbio"/>
</dbReference>
<dbReference type="PRO" id="PR:B1AKI9"/>
<dbReference type="Proteomes" id="UP000005640">
    <property type="component" value="Chromosome 20"/>
</dbReference>
<dbReference type="RNAct" id="B1AKI9">
    <property type="molecule type" value="protein"/>
</dbReference>
<dbReference type="Bgee" id="ENSG00000101230">
    <property type="expression patterns" value="Expressed in pericardium and 130 other cell types or tissues"/>
</dbReference>
<dbReference type="GO" id="GO:0005576">
    <property type="term" value="C:extracellular region"/>
    <property type="evidence" value="ECO:0007669"/>
    <property type="project" value="UniProtKB-SubCell"/>
</dbReference>
<dbReference type="GO" id="GO:0016525">
    <property type="term" value="P:negative regulation of angiogenesis"/>
    <property type="evidence" value="ECO:0000318"/>
    <property type="project" value="GO_Central"/>
</dbReference>
<dbReference type="FunFam" id="2.20.100.10:FF:000033">
    <property type="entry name" value="Isthmin 1"/>
    <property type="match status" value="1"/>
</dbReference>
<dbReference type="Gene3D" id="2.20.100.10">
    <property type="entry name" value="Thrombospondin type-1 (TSP1) repeat"/>
    <property type="match status" value="1"/>
</dbReference>
<dbReference type="InterPro" id="IPR005533">
    <property type="entry name" value="AMOP_dom"/>
</dbReference>
<dbReference type="InterPro" id="IPR051867">
    <property type="entry name" value="Angio_Inhib/Adhesion_GPCR"/>
</dbReference>
<dbReference type="InterPro" id="IPR000884">
    <property type="entry name" value="TSP1_rpt"/>
</dbReference>
<dbReference type="InterPro" id="IPR036383">
    <property type="entry name" value="TSP1_rpt_sf"/>
</dbReference>
<dbReference type="PANTHER" id="PTHR10239:SF30">
    <property type="entry name" value="ISTHMIN-1"/>
    <property type="match status" value="1"/>
</dbReference>
<dbReference type="PANTHER" id="PTHR10239">
    <property type="entry name" value="ISTHMIN-2"/>
    <property type="match status" value="1"/>
</dbReference>
<dbReference type="Pfam" id="PF03782">
    <property type="entry name" value="AMOP"/>
    <property type="match status" value="1"/>
</dbReference>
<dbReference type="Pfam" id="PF00090">
    <property type="entry name" value="TSP_1"/>
    <property type="match status" value="1"/>
</dbReference>
<dbReference type="SMART" id="SM00723">
    <property type="entry name" value="AMOP"/>
    <property type="match status" value="1"/>
</dbReference>
<dbReference type="SMART" id="SM00209">
    <property type="entry name" value="TSP1"/>
    <property type="match status" value="1"/>
</dbReference>
<dbReference type="SUPFAM" id="SSF82895">
    <property type="entry name" value="TSP-1 type 1 repeat"/>
    <property type="match status" value="1"/>
</dbReference>
<dbReference type="PROSITE" id="PS50856">
    <property type="entry name" value="AMOP"/>
    <property type="match status" value="1"/>
</dbReference>
<dbReference type="PROSITE" id="PS50092">
    <property type="entry name" value="TSP1"/>
    <property type="match status" value="1"/>
</dbReference>
<protein>
    <recommendedName>
        <fullName>Isthmin-1</fullName>
    </recommendedName>
</protein>
<proteinExistence type="evidence at protein level"/>
<evidence type="ECO:0000250" key="1">
    <source>
        <dbReference type="UniProtKB" id="A2ATD1"/>
    </source>
</evidence>
<evidence type="ECO:0000255" key="2"/>
<evidence type="ECO:0000255" key="3">
    <source>
        <dbReference type="PROSITE-ProRule" id="PRU00210"/>
    </source>
</evidence>
<evidence type="ECO:0000255" key="4">
    <source>
        <dbReference type="PROSITE-ProRule" id="PRU00347"/>
    </source>
</evidence>
<evidence type="ECO:0000256" key="5">
    <source>
        <dbReference type="SAM" id="MobiDB-lite"/>
    </source>
</evidence>
<evidence type="ECO:0000305" key="6"/>
<comment type="function">
    <text evidence="1">Acts as an angiogenesis inhibitor.</text>
</comment>
<comment type="subunit">
    <text evidence="1">Interacts with integrin ITGAV/ITGB5.</text>
</comment>
<comment type="subcellular location">
    <subcellularLocation>
        <location evidence="6">Secreted</location>
    </subcellularLocation>
</comment>
<comment type="domain">
    <text evidence="1">The C-terminal AMOP domain plays an important role in the anti-angiogenic function of ISM1.</text>
</comment>
<comment type="similarity">
    <text evidence="6">Belongs to the isthmin family.</text>
</comment>
<comment type="sequence caution" evidence="6">
    <conflict type="erroneous gene model prediction">
        <sequence resource="EMBL-CDS" id="EAX10318"/>
    </conflict>
</comment>
<sequence length="464" mass="52107">MVRLAAELLLLLGLLLLTLHITVLRGSGAADGPDAAAGNASQAQLQNNLNVGSDTTSETSFSLSKEAPREHLDHQAAHQPFPRPRFRQETGHPSLQRDFPRSFLLDLPNFPDLSKADINGQNPNIQVTIEVVDGPDSEADKDQHPENKPSWSVPSPDWRAWWQRSLSLARANSGDQDYKYDSTSDDSNFLNPPRGWDHTAPGHRTFETKDQPEYDSTDGEGDWSLWSVCSVTCGNGNQKRTRSCGYACTATESRTCDRPNCPGIEDTFRTAATEVSLLAGSEEFNATKLFEVDTDSCERWMSCKSEFLKKYMHKVMNDLPSCPCSYPTEVAYSTADIFDRIKRKDFRWKDASGPKEKLEIYKPTARYCIRSMLSLESTTLAAQHCCYGDNMQLITRGKGAGTPNLISTEFSAELHYKVDVLPWIICKGDWSRYNEARPPNNGQKCTESPSDEDYIKQFQEAREY</sequence>
<organism>
    <name type="scientific">Homo sapiens</name>
    <name type="common">Human</name>
    <dbReference type="NCBI Taxonomy" id="9606"/>
    <lineage>
        <taxon>Eukaryota</taxon>
        <taxon>Metazoa</taxon>
        <taxon>Chordata</taxon>
        <taxon>Craniata</taxon>
        <taxon>Vertebrata</taxon>
        <taxon>Euteleostomi</taxon>
        <taxon>Mammalia</taxon>
        <taxon>Eutheria</taxon>
        <taxon>Euarchontoglires</taxon>
        <taxon>Primates</taxon>
        <taxon>Haplorrhini</taxon>
        <taxon>Catarrhini</taxon>
        <taxon>Hominidae</taxon>
        <taxon>Homo</taxon>
    </lineage>
</organism>
<reference key="1">
    <citation type="journal article" date="2001" name="Nature">
        <title>The DNA sequence and comparative analysis of human chromosome 20.</title>
        <authorList>
            <person name="Deloukas P."/>
            <person name="Matthews L.H."/>
            <person name="Ashurst J.L."/>
            <person name="Burton J."/>
            <person name="Gilbert J.G.R."/>
            <person name="Jones M."/>
            <person name="Stavrides G."/>
            <person name="Almeida J.P."/>
            <person name="Babbage A.K."/>
            <person name="Bagguley C.L."/>
            <person name="Bailey J."/>
            <person name="Barlow K.F."/>
            <person name="Bates K.N."/>
            <person name="Beard L.M."/>
            <person name="Beare D.M."/>
            <person name="Beasley O.P."/>
            <person name="Bird C.P."/>
            <person name="Blakey S.E."/>
            <person name="Bridgeman A.M."/>
            <person name="Brown A.J."/>
            <person name="Buck D."/>
            <person name="Burrill W.D."/>
            <person name="Butler A.P."/>
            <person name="Carder C."/>
            <person name="Carter N.P."/>
            <person name="Chapman J.C."/>
            <person name="Clamp M."/>
            <person name="Clark G."/>
            <person name="Clark L.N."/>
            <person name="Clark S.Y."/>
            <person name="Clee C.M."/>
            <person name="Clegg S."/>
            <person name="Cobley V.E."/>
            <person name="Collier R.E."/>
            <person name="Connor R.E."/>
            <person name="Corby N.R."/>
            <person name="Coulson A."/>
            <person name="Coville G.J."/>
            <person name="Deadman R."/>
            <person name="Dhami P.D."/>
            <person name="Dunn M."/>
            <person name="Ellington A.G."/>
            <person name="Frankland J.A."/>
            <person name="Fraser A."/>
            <person name="French L."/>
            <person name="Garner P."/>
            <person name="Grafham D.V."/>
            <person name="Griffiths C."/>
            <person name="Griffiths M.N.D."/>
            <person name="Gwilliam R."/>
            <person name="Hall R.E."/>
            <person name="Hammond S."/>
            <person name="Harley J.L."/>
            <person name="Heath P.D."/>
            <person name="Ho S."/>
            <person name="Holden J.L."/>
            <person name="Howden P.J."/>
            <person name="Huckle E."/>
            <person name="Hunt A.R."/>
            <person name="Hunt S.E."/>
            <person name="Jekosch K."/>
            <person name="Johnson C.M."/>
            <person name="Johnson D."/>
            <person name="Kay M.P."/>
            <person name="Kimberley A.M."/>
            <person name="King A."/>
            <person name="Knights A."/>
            <person name="Laird G.K."/>
            <person name="Lawlor S."/>
            <person name="Lehvaeslaiho M.H."/>
            <person name="Leversha M.A."/>
            <person name="Lloyd C."/>
            <person name="Lloyd D.M."/>
            <person name="Lovell J.D."/>
            <person name="Marsh V.L."/>
            <person name="Martin S.L."/>
            <person name="McConnachie L.J."/>
            <person name="McLay K."/>
            <person name="McMurray A.A."/>
            <person name="Milne S.A."/>
            <person name="Mistry D."/>
            <person name="Moore M.J.F."/>
            <person name="Mullikin J.C."/>
            <person name="Nickerson T."/>
            <person name="Oliver K."/>
            <person name="Parker A."/>
            <person name="Patel R."/>
            <person name="Pearce T.A.V."/>
            <person name="Peck A.I."/>
            <person name="Phillimore B.J.C.T."/>
            <person name="Prathalingam S.R."/>
            <person name="Plumb R.W."/>
            <person name="Ramsay H."/>
            <person name="Rice C.M."/>
            <person name="Ross M.T."/>
            <person name="Scott C.E."/>
            <person name="Sehra H.K."/>
            <person name="Shownkeen R."/>
            <person name="Sims S."/>
            <person name="Skuce C.D."/>
            <person name="Smith M.L."/>
            <person name="Soderlund C."/>
            <person name="Steward C.A."/>
            <person name="Sulston J.E."/>
            <person name="Swann R.M."/>
            <person name="Sycamore N."/>
            <person name="Taylor R."/>
            <person name="Tee L."/>
            <person name="Thomas D.W."/>
            <person name="Thorpe A."/>
            <person name="Tracey A."/>
            <person name="Tromans A.C."/>
            <person name="Vaudin M."/>
            <person name="Wall M."/>
            <person name="Wallis J.M."/>
            <person name="Whitehead S.L."/>
            <person name="Whittaker P."/>
            <person name="Willey D.L."/>
            <person name="Williams L."/>
            <person name="Williams S.A."/>
            <person name="Wilming L."/>
            <person name="Wray P.W."/>
            <person name="Hubbard T."/>
            <person name="Durbin R.M."/>
            <person name="Bentley D.R."/>
            <person name="Beck S."/>
            <person name="Rogers J."/>
        </authorList>
    </citation>
    <scope>NUCLEOTIDE SEQUENCE [LARGE SCALE GENOMIC DNA]</scope>
</reference>
<reference key="2">
    <citation type="submission" date="2005-09" db="EMBL/GenBank/DDBJ databases">
        <authorList>
            <person name="Mural R.J."/>
            <person name="Istrail S."/>
            <person name="Sutton G.G."/>
            <person name="Florea L."/>
            <person name="Halpern A.L."/>
            <person name="Mobarry C.M."/>
            <person name="Lippert R."/>
            <person name="Walenz B."/>
            <person name="Shatkay H."/>
            <person name="Dew I."/>
            <person name="Miller J.R."/>
            <person name="Flanigan M.J."/>
            <person name="Edwards N.J."/>
            <person name="Bolanos R."/>
            <person name="Fasulo D."/>
            <person name="Halldorsson B.V."/>
            <person name="Hannenhalli S."/>
            <person name="Turner R."/>
            <person name="Yooseph S."/>
            <person name="Lu F."/>
            <person name="Nusskern D.R."/>
            <person name="Shue B.C."/>
            <person name="Zheng X.H."/>
            <person name="Zhong F."/>
            <person name="Delcher A.L."/>
            <person name="Huson D.H."/>
            <person name="Kravitz S.A."/>
            <person name="Mouchard L."/>
            <person name="Reinert K."/>
            <person name="Remington K.A."/>
            <person name="Clark A.G."/>
            <person name="Waterman M.S."/>
            <person name="Eichler E.E."/>
            <person name="Adams M.D."/>
            <person name="Hunkapiller M.W."/>
            <person name="Myers E.W."/>
            <person name="Venter J.C."/>
        </authorList>
    </citation>
    <scope>NUCLEOTIDE SEQUENCE [LARGE SCALE GENOMIC DNA]</scope>
</reference>
<reference key="3">
    <citation type="journal article" date="2004" name="Genome Res.">
        <title>The status, quality, and expansion of the NIH full-length cDNA project: the Mammalian Gene Collection (MGC).</title>
        <authorList>
            <consortium name="The MGC Project Team"/>
        </authorList>
    </citation>
    <scope>NUCLEOTIDE SEQUENCE [LARGE SCALE MRNA] OF 314-464</scope>
    <source>
        <tissue>Skin</tissue>
    </source>
</reference>
<reference key="4">
    <citation type="journal article" date="2002" name="Mech. Dev.">
        <title>Isthmin is a novel secreted protein expressed as part of the Fgf-8 synexpression group in the Xenopus midbrain-hindbrain organizer.</title>
        <authorList>
            <person name="Pera E.M."/>
            <person name="Kim J.I."/>
            <person name="Martinez S.L."/>
            <person name="Brechner M."/>
            <person name="Li S.-Y."/>
            <person name="Wessely O."/>
            <person name="De Robertis E.M."/>
        </authorList>
    </citation>
    <scope>IDENTIFICATION</scope>
</reference>
<feature type="signal peptide" evidence="2">
    <location>
        <begin position="1"/>
        <end position="29"/>
    </location>
</feature>
<feature type="chain" id="PRO_0000348256" description="Isthmin-1">
    <location>
        <begin position="30"/>
        <end position="464"/>
    </location>
</feature>
<feature type="domain" description="TSP type-1" evidence="3">
    <location>
        <begin position="218"/>
        <end position="262"/>
    </location>
</feature>
<feature type="domain" description="AMOP" evidence="4">
    <location>
        <begin position="289"/>
        <end position="452"/>
    </location>
</feature>
<feature type="region of interest" description="Disordered" evidence="5">
    <location>
        <begin position="50"/>
        <end position="98"/>
    </location>
</feature>
<feature type="region of interest" description="Disordered" evidence="5">
    <location>
        <begin position="135"/>
        <end position="155"/>
    </location>
</feature>
<feature type="region of interest" description="Disordered" evidence="5">
    <location>
        <begin position="173"/>
        <end position="219"/>
    </location>
</feature>
<feature type="compositionally biased region" description="Polar residues" evidence="5">
    <location>
        <begin position="51"/>
        <end position="63"/>
    </location>
</feature>
<feature type="compositionally biased region" description="Basic and acidic residues" evidence="5">
    <location>
        <begin position="66"/>
        <end position="76"/>
    </location>
</feature>
<feature type="compositionally biased region" description="Basic and acidic residues" evidence="5">
    <location>
        <begin position="138"/>
        <end position="147"/>
    </location>
</feature>
<feature type="glycosylation site" description="N-linked (GlcNAc...) asparagine" evidence="2">
    <location>
        <position position="39"/>
    </location>
</feature>
<feature type="disulfide bond" evidence="3">
    <location>
        <begin position="229"/>
        <end position="256"/>
    </location>
</feature>
<feature type="disulfide bond" evidence="3">
    <location>
        <begin position="233"/>
        <end position="261"/>
    </location>
</feature>
<feature type="disulfide bond" evidence="3">
    <location>
        <begin position="244"/>
        <end position="248"/>
    </location>
</feature>
<feature type="sequence variant" id="VAR_052664" description="In dbSNP:rs3747933.">
    <original>P</original>
    <variation>R</variation>
    <location>
        <position position="193"/>
    </location>
</feature>